<feature type="chain" id="PRO_1000118675" description="DNA mismatch repair protein MutS">
    <location>
        <begin position="1"/>
        <end position="871"/>
    </location>
</feature>
<feature type="binding site" evidence="1">
    <location>
        <begin position="625"/>
        <end position="632"/>
    </location>
    <ligand>
        <name>ATP</name>
        <dbReference type="ChEBI" id="CHEBI:30616"/>
    </ligand>
</feature>
<comment type="function">
    <text evidence="1">This protein is involved in the repair of mismatches in DNA. It is possible that it carries out the mismatch recognition step. This protein has a weak ATPase activity.</text>
</comment>
<comment type="similarity">
    <text evidence="1">Belongs to the DNA mismatch repair MutS family.</text>
</comment>
<evidence type="ECO:0000255" key="1">
    <source>
        <dbReference type="HAMAP-Rule" id="MF_00096"/>
    </source>
</evidence>
<accession>B3EEE1</accession>
<organism>
    <name type="scientific">Chlorobium limicola (strain DSM 245 / NBRC 103803 / 6330)</name>
    <dbReference type="NCBI Taxonomy" id="290315"/>
    <lineage>
        <taxon>Bacteria</taxon>
        <taxon>Pseudomonadati</taxon>
        <taxon>Chlorobiota</taxon>
        <taxon>Chlorobiia</taxon>
        <taxon>Chlorobiales</taxon>
        <taxon>Chlorobiaceae</taxon>
        <taxon>Chlorobium/Pelodictyon group</taxon>
        <taxon>Chlorobium</taxon>
    </lineage>
</organism>
<reference key="1">
    <citation type="submission" date="2008-05" db="EMBL/GenBank/DDBJ databases">
        <title>Complete sequence of Chlorobium limicola DSM 245.</title>
        <authorList>
            <consortium name="US DOE Joint Genome Institute"/>
            <person name="Lucas S."/>
            <person name="Copeland A."/>
            <person name="Lapidus A."/>
            <person name="Glavina del Rio T."/>
            <person name="Dalin E."/>
            <person name="Tice H."/>
            <person name="Bruce D."/>
            <person name="Goodwin L."/>
            <person name="Pitluck S."/>
            <person name="Schmutz J."/>
            <person name="Larimer F."/>
            <person name="Land M."/>
            <person name="Hauser L."/>
            <person name="Kyrpides N."/>
            <person name="Ovchinnikova G."/>
            <person name="Zhao F."/>
            <person name="Li T."/>
            <person name="Liu Z."/>
            <person name="Overmann J."/>
            <person name="Bryant D.A."/>
            <person name="Richardson P."/>
        </authorList>
    </citation>
    <scope>NUCLEOTIDE SEQUENCE [LARGE SCALE GENOMIC DNA]</scope>
    <source>
        <strain>DSM 245 / NBRC 103803 / 6330</strain>
    </source>
</reference>
<protein>
    <recommendedName>
        <fullName evidence="1">DNA mismatch repair protein MutS</fullName>
    </recommendedName>
</protein>
<sequence>MSAKGVSEKEHSPMMRQYLDVKDRYPDYLLLFRVGDFYETFFDDAREVAAALNIVLTRRSNEIPMAGFPHHASEGYIAKLVKKGYKVAVCDQVEDPAVAKGIVRREITDIITPGVTYSDSILDDRHNNYLCAIVFLRVGRQTVCGAAFIDVTTGEFRIAGLLPEDASVFLRSLHPAELLVSAADRERSETLRHALPAGTAFTVLDEWLFREEQAGEILARQFRTHSLKGFGIHDNPAGQVAAGVILHYLEETRQSSLQYITRITPLQSGDYMTLDLQTKRNLEIISSMQDGSINGSLLQVIDRTRNPMGARLLRQWLQRPLLRAADITMRLDAVDELKKMKPFRESVCCDLGQISDLERALARIATLRAIPREVRQLGSALAVIPLLKQSFQDTVSKRLCSIADALMPLPDLVAMIESAVDPEAGASMRDGGYIRKGYHQELDDLRQTASTAKERLLEIQQEERERTAIGSLKVQFNRVFGYYIEISKANRDKVPPYYEKKQTLVNAERFTIPALKEYEEKILNAEERSLVLEQQLFQALCCRIAGHAEVIQENAALIAEIDCLAAYAVCADEYGYCKPLIAEHTGLRILNGRHPVLERILPADEPYIANDALFDDRQKMLMITGPNMAGKSSYLRQTGLIVLLAQAGCFVPAEQAEIGVVDRIFTRVGASDNLASGESTFLVEMNEAADILNNATAKSLLLLDEIGRGTSTYDGLAIAWSMCEYIHRQIGARTLFATHYHELAELEGLLPGVVNYNASVLESGDRVIFLRKIVRGASDNSYGIEVARMSGMPSAVITRAKAILAGMEKRDIATPSSSGLSLQSMQISLFDEIDTRLRTAIEVIDIDRMTPLDALVELKKLQGLVRTGNII</sequence>
<keyword id="KW-0067">ATP-binding</keyword>
<keyword id="KW-0227">DNA damage</keyword>
<keyword id="KW-0234">DNA repair</keyword>
<keyword id="KW-0238">DNA-binding</keyword>
<keyword id="KW-0547">Nucleotide-binding</keyword>
<dbReference type="EMBL" id="CP001097">
    <property type="protein sequence ID" value="ACD90751.1"/>
    <property type="molecule type" value="Genomic_DNA"/>
</dbReference>
<dbReference type="RefSeq" id="WP_012466624.1">
    <property type="nucleotide sequence ID" value="NC_010803.1"/>
</dbReference>
<dbReference type="SMR" id="B3EEE1"/>
<dbReference type="STRING" id="290315.Clim_1709"/>
<dbReference type="KEGG" id="cli:Clim_1709"/>
<dbReference type="eggNOG" id="COG0249">
    <property type="taxonomic scope" value="Bacteria"/>
</dbReference>
<dbReference type="HOGENOM" id="CLU_002472_3_1_10"/>
<dbReference type="OrthoDB" id="9802448at2"/>
<dbReference type="Proteomes" id="UP000008841">
    <property type="component" value="Chromosome"/>
</dbReference>
<dbReference type="GO" id="GO:0005829">
    <property type="term" value="C:cytosol"/>
    <property type="evidence" value="ECO:0007669"/>
    <property type="project" value="TreeGrafter"/>
</dbReference>
<dbReference type="GO" id="GO:0005524">
    <property type="term" value="F:ATP binding"/>
    <property type="evidence" value="ECO:0007669"/>
    <property type="project" value="UniProtKB-UniRule"/>
</dbReference>
<dbReference type="GO" id="GO:0140664">
    <property type="term" value="F:ATP-dependent DNA damage sensor activity"/>
    <property type="evidence" value="ECO:0007669"/>
    <property type="project" value="InterPro"/>
</dbReference>
<dbReference type="GO" id="GO:0003684">
    <property type="term" value="F:damaged DNA binding"/>
    <property type="evidence" value="ECO:0007669"/>
    <property type="project" value="UniProtKB-UniRule"/>
</dbReference>
<dbReference type="GO" id="GO:0030983">
    <property type="term" value="F:mismatched DNA binding"/>
    <property type="evidence" value="ECO:0007669"/>
    <property type="project" value="InterPro"/>
</dbReference>
<dbReference type="GO" id="GO:0006298">
    <property type="term" value="P:mismatch repair"/>
    <property type="evidence" value="ECO:0007669"/>
    <property type="project" value="UniProtKB-UniRule"/>
</dbReference>
<dbReference type="CDD" id="cd03284">
    <property type="entry name" value="ABC_MutS1"/>
    <property type="match status" value="1"/>
</dbReference>
<dbReference type="FunFam" id="3.40.1170.10:FF:000001">
    <property type="entry name" value="DNA mismatch repair protein MutS"/>
    <property type="match status" value="1"/>
</dbReference>
<dbReference type="FunFam" id="3.40.50.300:FF:000870">
    <property type="entry name" value="MutS protein homolog 4"/>
    <property type="match status" value="1"/>
</dbReference>
<dbReference type="Gene3D" id="1.10.1420.10">
    <property type="match status" value="2"/>
</dbReference>
<dbReference type="Gene3D" id="3.40.1170.10">
    <property type="entry name" value="DNA repair protein MutS, domain I"/>
    <property type="match status" value="1"/>
</dbReference>
<dbReference type="Gene3D" id="3.30.420.110">
    <property type="entry name" value="MutS, connector domain"/>
    <property type="match status" value="1"/>
</dbReference>
<dbReference type="Gene3D" id="3.40.50.300">
    <property type="entry name" value="P-loop containing nucleotide triphosphate hydrolases"/>
    <property type="match status" value="1"/>
</dbReference>
<dbReference type="HAMAP" id="MF_00096">
    <property type="entry name" value="MutS"/>
    <property type="match status" value="1"/>
</dbReference>
<dbReference type="InterPro" id="IPR005748">
    <property type="entry name" value="DNA_mismatch_repair_MutS"/>
</dbReference>
<dbReference type="InterPro" id="IPR007695">
    <property type="entry name" value="DNA_mismatch_repair_MutS-lik_N"/>
</dbReference>
<dbReference type="InterPro" id="IPR017261">
    <property type="entry name" value="DNA_mismatch_repair_MutS/MSH"/>
</dbReference>
<dbReference type="InterPro" id="IPR000432">
    <property type="entry name" value="DNA_mismatch_repair_MutS_C"/>
</dbReference>
<dbReference type="InterPro" id="IPR007861">
    <property type="entry name" value="DNA_mismatch_repair_MutS_clamp"/>
</dbReference>
<dbReference type="InterPro" id="IPR007696">
    <property type="entry name" value="DNA_mismatch_repair_MutS_core"/>
</dbReference>
<dbReference type="InterPro" id="IPR016151">
    <property type="entry name" value="DNA_mismatch_repair_MutS_N"/>
</dbReference>
<dbReference type="InterPro" id="IPR036187">
    <property type="entry name" value="DNA_mismatch_repair_MutS_sf"/>
</dbReference>
<dbReference type="InterPro" id="IPR007860">
    <property type="entry name" value="DNA_mmatch_repair_MutS_con_dom"/>
</dbReference>
<dbReference type="InterPro" id="IPR045076">
    <property type="entry name" value="MutS"/>
</dbReference>
<dbReference type="InterPro" id="IPR036678">
    <property type="entry name" value="MutS_con_dom_sf"/>
</dbReference>
<dbReference type="InterPro" id="IPR027417">
    <property type="entry name" value="P-loop_NTPase"/>
</dbReference>
<dbReference type="NCBIfam" id="TIGR01070">
    <property type="entry name" value="mutS1"/>
    <property type="match status" value="1"/>
</dbReference>
<dbReference type="NCBIfam" id="NF003810">
    <property type="entry name" value="PRK05399.1"/>
    <property type="match status" value="1"/>
</dbReference>
<dbReference type="PANTHER" id="PTHR11361:SF34">
    <property type="entry name" value="DNA MISMATCH REPAIR PROTEIN MSH1, MITOCHONDRIAL"/>
    <property type="match status" value="1"/>
</dbReference>
<dbReference type="PANTHER" id="PTHR11361">
    <property type="entry name" value="DNA MISMATCH REPAIR PROTEIN MUTS FAMILY MEMBER"/>
    <property type="match status" value="1"/>
</dbReference>
<dbReference type="Pfam" id="PF01624">
    <property type="entry name" value="MutS_I"/>
    <property type="match status" value="1"/>
</dbReference>
<dbReference type="Pfam" id="PF05188">
    <property type="entry name" value="MutS_II"/>
    <property type="match status" value="1"/>
</dbReference>
<dbReference type="Pfam" id="PF05192">
    <property type="entry name" value="MutS_III"/>
    <property type="match status" value="1"/>
</dbReference>
<dbReference type="Pfam" id="PF05190">
    <property type="entry name" value="MutS_IV"/>
    <property type="match status" value="1"/>
</dbReference>
<dbReference type="Pfam" id="PF00488">
    <property type="entry name" value="MutS_V"/>
    <property type="match status" value="1"/>
</dbReference>
<dbReference type="PIRSF" id="PIRSF037677">
    <property type="entry name" value="DNA_mis_repair_Msh6"/>
    <property type="match status" value="1"/>
</dbReference>
<dbReference type="SMART" id="SM00534">
    <property type="entry name" value="MUTSac"/>
    <property type="match status" value="1"/>
</dbReference>
<dbReference type="SMART" id="SM00533">
    <property type="entry name" value="MUTSd"/>
    <property type="match status" value="1"/>
</dbReference>
<dbReference type="SUPFAM" id="SSF55271">
    <property type="entry name" value="DNA repair protein MutS, domain I"/>
    <property type="match status" value="1"/>
</dbReference>
<dbReference type="SUPFAM" id="SSF53150">
    <property type="entry name" value="DNA repair protein MutS, domain II"/>
    <property type="match status" value="1"/>
</dbReference>
<dbReference type="SUPFAM" id="SSF48334">
    <property type="entry name" value="DNA repair protein MutS, domain III"/>
    <property type="match status" value="1"/>
</dbReference>
<dbReference type="SUPFAM" id="SSF52540">
    <property type="entry name" value="P-loop containing nucleoside triphosphate hydrolases"/>
    <property type="match status" value="1"/>
</dbReference>
<dbReference type="PROSITE" id="PS00486">
    <property type="entry name" value="DNA_MISMATCH_REPAIR_2"/>
    <property type="match status" value="1"/>
</dbReference>
<name>MUTS_CHLL2</name>
<gene>
    <name evidence="1" type="primary">mutS</name>
    <name type="ordered locus">Clim_1709</name>
</gene>
<proteinExistence type="inferred from homology"/>